<protein>
    <recommendedName>
        <fullName>GTP-binding protein SAR2</fullName>
    </recommendedName>
</protein>
<reference key="1">
    <citation type="journal article" date="1994" name="Plant Mol. Biol.">
        <title>Cloning and characterization of a tomato GTPase-like gene related to yeast and Arabidopsis genes involved in vesicular transport.</title>
        <authorList>
            <person name="Davies C."/>
        </authorList>
    </citation>
    <scope>NUCLEOTIDE SEQUENCE [MRNA]</scope>
    <source>
        <tissue>Pericarp</tissue>
    </source>
</reference>
<name>SAR2_SOLLC</name>
<organism>
    <name type="scientific">Solanum lycopersicum</name>
    <name type="common">Tomato</name>
    <name type="synonym">Lycopersicon esculentum</name>
    <dbReference type="NCBI Taxonomy" id="4081"/>
    <lineage>
        <taxon>Eukaryota</taxon>
        <taxon>Viridiplantae</taxon>
        <taxon>Streptophyta</taxon>
        <taxon>Embryophyta</taxon>
        <taxon>Tracheophyta</taxon>
        <taxon>Spermatophyta</taxon>
        <taxon>Magnoliopsida</taxon>
        <taxon>eudicotyledons</taxon>
        <taxon>Gunneridae</taxon>
        <taxon>Pentapetalae</taxon>
        <taxon>asterids</taxon>
        <taxon>lamiids</taxon>
        <taxon>Solanales</taxon>
        <taxon>Solanaceae</taxon>
        <taxon>Solanoideae</taxon>
        <taxon>Solaneae</taxon>
        <taxon>Solanum</taxon>
        <taxon>Solanum subgen. Lycopersicon</taxon>
    </lineage>
</organism>
<evidence type="ECO:0000250" key="1"/>
<evidence type="ECO:0000305" key="2"/>
<accession>P52884</accession>
<dbReference type="EMBL" id="L12051">
    <property type="protein sequence ID" value="AAA34168.1"/>
    <property type="molecule type" value="mRNA"/>
</dbReference>
<dbReference type="PIR" id="S42528">
    <property type="entry name" value="S42528"/>
</dbReference>
<dbReference type="RefSeq" id="NP_001234640.1">
    <property type="nucleotide sequence ID" value="NM_001247711.1"/>
</dbReference>
<dbReference type="SMR" id="P52884"/>
<dbReference type="STRING" id="4081.P52884"/>
<dbReference type="PaxDb" id="4081-Solyc01g060130.2.1"/>
<dbReference type="EnsemblPlants" id="Solyc01g060130.3.1">
    <property type="protein sequence ID" value="Solyc01g060130.3.1"/>
    <property type="gene ID" value="Solyc01g060130.3"/>
</dbReference>
<dbReference type="GeneID" id="543958"/>
<dbReference type="Gramene" id="Solyc01g060130.3.1">
    <property type="protein sequence ID" value="Solyc01g060130.3.1"/>
    <property type="gene ID" value="Solyc01g060130.3"/>
</dbReference>
<dbReference type="KEGG" id="sly:543958"/>
<dbReference type="eggNOG" id="KOG0077">
    <property type="taxonomic scope" value="Eukaryota"/>
</dbReference>
<dbReference type="HOGENOM" id="CLU_040729_6_0_1"/>
<dbReference type="InParanoid" id="P52884"/>
<dbReference type="OMA" id="DCADYER"/>
<dbReference type="OrthoDB" id="2011769at2759"/>
<dbReference type="PhylomeDB" id="P52884"/>
<dbReference type="Proteomes" id="UP000004994">
    <property type="component" value="Chromosome 1"/>
</dbReference>
<dbReference type="GO" id="GO:0030127">
    <property type="term" value="C:COPII vesicle coat"/>
    <property type="evidence" value="ECO:0000318"/>
    <property type="project" value="GO_Central"/>
</dbReference>
<dbReference type="GO" id="GO:0070971">
    <property type="term" value="C:endoplasmic reticulum exit site"/>
    <property type="evidence" value="ECO:0000318"/>
    <property type="project" value="GO_Central"/>
</dbReference>
<dbReference type="GO" id="GO:0005794">
    <property type="term" value="C:Golgi apparatus"/>
    <property type="evidence" value="ECO:0007669"/>
    <property type="project" value="UniProtKB-SubCell"/>
</dbReference>
<dbReference type="GO" id="GO:0005525">
    <property type="term" value="F:GTP binding"/>
    <property type="evidence" value="ECO:0007669"/>
    <property type="project" value="UniProtKB-KW"/>
</dbReference>
<dbReference type="GO" id="GO:0003924">
    <property type="term" value="F:GTPase activity"/>
    <property type="evidence" value="ECO:0000318"/>
    <property type="project" value="GO_Central"/>
</dbReference>
<dbReference type="GO" id="GO:0006888">
    <property type="term" value="P:endoplasmic reticulum to Golgi vesicle-mediated transport"/>
    <property type="evidence" value="ECO:0000318"/>
    <property type="project" value="GO_Central"/>
</dbReference>
<dbReference type="GO" id="GO:0006886">
    <property type="term" value="P:intracellular protein transport"/>
    <property type="evidence" value="ECO:0007669"/>
    <property type="project" value="InterPro"/>
</dbReference>
<dbReference type="GO" id="GO:0061024">
    <property type="term" value="P:membrane organization"/>
    <property type="evidence" value="ECO:0000318"/>
    <property type="project" value="GO_Central"/>
</dbReference>
<dbReference type="GO" id="GO:0003400">
    <property type="term" value="P:regulation of COPII vesicle coating"/>
    <property type="evidence" value="ECO:0000318"/>
    <property type="project" value="GO_Central"/>
</dbReference>
<dbReference type="GO" id="GO:0016050">
    <property type="term" value="P:vesicle organization"/>
    <property type="evidence" value="ECO:0000318"/>
    <property type="project" value="GO_Central"/>
</dbReference>
<dbReference type="CDD" id="cd00879">
    <property type="entry name" value="Sar1"/>
    <property type="match status" value="1"/>
</dbReference>
<dbReference type="FunFam" id="3.40.50.300:FF:000261">
    <property type="entry name" value="GTP-binding protein SAR1A"/>
    <property type="match status" value="1"/>
</dbReference>
<dbReference type="Gene3D" id="3.40.50.300">
    <property type="entry name" value="P-loop containing nucleotide triphosphate hydrolases"/>
    <property type="match status" value="1"/>
</dbReference>
<dbReference type="InterPro" id="IPR027417">
    <property type="entry name" value="P-loop_NTPase"/>
</dbReference>
<dbReference type="InterPro" id="IPR005225">
    <property type="entry name" value="Small_GTP-bd"/>
</dbReference>
<dbReference type="InterPro" id="IPR006689">
    <property type="entry name" value="Small_GTPase_ARF/SAR"/>
</dbReference>
<dbReference type="InterPro" id="IPR006687">
    <property type="entry name" value="Small_GTPase_SAR1"/>
</dbReference>
<dbReference type="NCBIfam" id="TIGR00231">
    <property type="entry name" value="small_GTP"/>
    <property type="match status" value="1"/>
</dbReference>
<dbReference type="PANTHER" id="PTHR45684">
    <property type="entry name" value="RE74312P"/>
    <property type="match status" value="1"/>
</dbReference>
<dbReference type="Pfam" id="PF00025">
    <property type="entry name" value="Arf"/>
    <property type="match status" value="1"/>
</dbReference>
<dbReference type="PRINTS" id="PR00328">
    <property type="entry name" value="SAR1GTPBP"/>
</dbReference>
<dbReference type="SMART" id="SM00177">
    <property type="entry name" value="ARF"/>
    <property type="match status" value="1"/>
</dbReference>
<dbReference type="SMART" id="SM00178">
    <property type="entry name" value="SAR"/>
    <property type="match status" value="1"/>
</dbReference>
<dbReference type="SUPFAM" id="SSF52540">
    <property type="entry name" value="P-loop containing nucleoside triphosphate hydrolases"/>
    <property type="match status" value="1"/>
</dbReference>
<dbReference type="PROSITE" id="PS51422">
    <property type="entry name" value="SAR1"/>
    <property type="match status" value="1"/>
</dbReference>
<proteinExistence type="evidence at transcript level"/>
<gene>
    <name type="primary">SAR2</name>
</gene>
<sequence length="193" mass="21923">MFLVDWFYGVLASLGLWQKDAKILFLGLDNAGKTTLLHMLKDERLVQHQPTQYPTSEELSIGNIKFKAFDLGGHQIARRVWRDYYAKVDAVVYLVDANDRERFPEAKKELDGLLSDESLTNVPFLILGNKIDIPYAASEDELRYHLGLTGVTTGKGNINLAGTNVRPIEVFMCSIVRKMGYGEGFKWMSQYIK</sequence>
<keyword id="KW-0256">Endoplasmic reticulum</keyword>
<keyword id="KW-0931">ER-Golgi transport</keyword>
<keyword id="KW-0333">Golgi apparatus</keyword>
<keyword id="KW-0342">GTP-binding</keyword>
<keyword id="KW-0547">Nucleotide-binding</keyword>
<keyword id="KW-0653">Protein transport</keyword>
<keyword id="KW-1185">Reference proteome</keyword>
<keyword id="KW-0813">Transport</keyword>
<comment type="function">
    <text evidence="1">Involved in transport from the endoplasmic reticulum to the Golgi apparatus.</text>
</comment>
<comment type="subcellular location">
    <subcellularLocation>
        <location evidence="1">Endoplasmic reticulum</location>
    </subcellularLocation>
    <subcellularLocation>
        <location evidence="1">Golgi apparatus</location>
    </subcellularLocation>
</comment>
<comment type="similarity">
    <text evidence="2">Belongs to the small GTPase superfamily. SAR1 family.</text>
</comment>
<feature type="chain" id="PRO_0000206269" description="GTP-binding protein SAR2">
    <location>
        <begin position="1"/>
        <end position="193"/>
    </location>
</feature>
<feature type="binding site" evidence="1">
    <location>
        <begin position="27"/>
        <end position="34"/>
    </location>
    <ligand>
        <name>GTP</name>
        <dbReference type="ChEBI" id="CHEBI:37565"/>
    </ligand>
</feature>
<feature type="binding site" evidence="1">
    <location>
        <begin position="70"/>
        <end position="73"/>
    </location>
    <ligand>
        <name>GTP</name>
        <dbReference type="ChEBI" id="CHEBI:37565"/>
    </ligand>
</feature>
<feature type="binding site" evidence="1">
    <location>
        <begin position="129"/>
        <end position="132"/>
    </location>
    <ligand>
        <name>GTP</name>
        <dbReference type="ChEBI" id="CHEBI:37565"/>
    </ligand>
</feature>